<sequence>MLVPKRVKHRREFRGKMRGEAKGGKEVAFGEYGLQATTSHWITNRQIEAARIAMTRYMKRGGKVWIKIFPHKSYTAKAIGVRMGSGKGAPEGWVAPVKRGKVMFEVAGVSEEIAREALRLASHKLPVKCKFVKREAE</sequence>
<feature type="chain" id="PRO_1000086783" description="Large ribosomal subunit protein uL16">
    <location>
        <begin position="1"/>
        <end position="137"/>
    </location>
</feature>
<protein>
    <recommendedName>
        <fullName evidence="1">Large ribosomal subunit protein uL16</fullName>
    </recommendedName>
    <alternativeName>
        <fullName evidence="2">50S ribosomal protein L16</fullName>
    </alternativeName>
</protein>
<accession>A8AZL8</accession>
<keyword id="KW-1185">Reference proteome</keyword>
<keyword id="KW-0687">Ribonucleoprotein</keyword>
<keyword id="KW-0689">Ribosomal protein</keyword>
<keyword id="KW-0694">RNA-binding</keyword>
<keyword id="KW-0699">rRNA-binding</keyword>
<keyword id="KW-0820">tRNA-binding</keyword>
<organism>
    <name type="scientific">Streptococcus gordonii (strain Challis / ATCC 35105 / BCRC 15272 / CH1 / DL1 / V288)</name>
    <dbReference type="NCBI Taxonomy" id="467705"/>
    <lineage>
        <taxon>Bacteria</taxon>
        <taxon>Bacillati</taxon>
        <taxon>Bacillota</taxon>
        <taxon>Bacilli</taxon>
        <taxon>Lactobacillales</taxon>
        <taxon>Streptococcaceae</taxon>
        <taxon>Streptococcus</taxon>
    </lineage>
</organism>
<dbReference type="EMBL" id="CP000725">
    <property type="protein sequence ID" value="ABV09513.1"/>
    <property type="molecule type" value="Genomic_DNA"/>
</dbReference>
<dbReference type="RefSeq" id="WP_000960948.1">
    <property type="nucleotide sequence ID" value="NC_009785.1"/>
</dbReference>
<dbReference type="SMR" id="A8AZL8"/>
<dbReference type="STRING" id="467705.SGO_1978"/>
<dbReference type="GeneID" id="93786849"/>
<dbReference type="KEGG" id="sgo:SGO_1978"/>
<dbReference type="eggNOG" id="COG0197">
    <property type="taxonomic scope" value="Bacteria"/>
</dbReference>
<dbReference type="HOGENOM" id="CLU_078858_2_1_9"/>
<dbReference type="Proteomes" id="UP000001131">
    <property type="component" value="Chromosome"/>
</dbReference>
<dbReference type="GO" id="GO:0022625">
    <property type="term" value="C:cytosolic large ribosomal subunit"/>
    <property type="evidence" value="ECO:0007669"/>
    <property type="project" value="TreeGrafter"/>
</dbReference>
<dbReference type="GO" id="GO:0019843">
    <property type="term" value="F:rRNA binding"/>
    <property type="evidence" value="ECO:0007669"/>
    <property type="project" value="UniProtKB-UniRule"/>
</dbReference>
<dbReference type="GO" id="GO:0003735">
    <property type="term" value="F:structural constituent of ribosome"/>
    <property type="evidence" value="ECO:0007669"/>
    <property type="project" value="InterPro"/>
</dbReference>
<dbReference type="GO" id="GO:0000049">
    <property type="term" value="F:tRNA binding"/>
    <property type="evidence" value="ECO:0007669"/>
    <property type="project" value="UniProtKB-KW"/>
</dbReference>
<dbReference type="GO" id="GO:0006412">
    <property type="term" value="P:translation"/>
    <property type="evidence" value="ECO:0007669"/>
    <property type="project" value="UniProtKB-UniRule"/>
</dbReference>
<dbReference type="CDD" id="cd01433">
    <property type="entry name" value="Ribosomal_L16_L10e"/>
    <property type="match status" value="1"/>
</dbReference>
<dbReference type="FunFam" id="3.90.1170.10:FF:000001">
    <property type="entry name" value="50S ribosomal protein L16"/>
    <property type="match status" value="1"/>
</dbReference>
<dbReference type="Gene3D" id="3.90.1170.10">
    <property type="entry name" value="Ribosomal protein L10e/L16"/>
    <property type="match status" value="1"/>
</dbReference>
<dbReference type="HAMAP" id="MF_01342">
    <property type="entry name" value="Ribosomal_uL16"/>
    <property type="match status" value="1"/>
</dbReference>
<dbReference type="InterPro" id="IPR047873">
    <property type="entry name" value="Ribosomal_uL16"/>
</dbReference>
<dbReference type="InterPro" id="IPR000114">
    <property type="entry name" value="Ribosomal_uL16_bact-type"/>
</dbReference>
<dbReference type="InterPro" id="IPR020798">
    <property type="entry name" value="Ribosomal_uL16_CS"/>
</dbReference>
<dbReference type="InterPro" id="IPR016180">
    <property type="entry name" value="Ribosomal_uL16_dom"/>
</dbReference>
<dbReference type="InterPro" id="IPR036920">
    <property type="entry name" value="Ribosomal_uL16_sf"/>
</dbReference>
<dbReference type="NCBIfam" id="TIGR01164">
    <property type="entry name" value="rplP_bact"/>
    <property type="match status" value="1"/>
</dbReference>
<dbReference type="PANTHER" id="PTHR12220">
    <property type="entry name" value="50S/60S RIBOSOMAL PROTEIN L16"/>
    <property type="match status" value="1"/>
</dbReference>
<dbReference type="PANTHER" id="PTHR12220:SF13">
    <property type="entry name" value="LARGE RIBOSOMAL SUBUNIT PROTEIN UL16M"/>
    <property type="match status" value="1"/>
</dbReference>
<dbReference type="Pfam" id="PF00252">
    <property type="entry name" value="Ribosomal_L16"/>
    <property type="match status" value="1"/>
</dbReference>
<dbReference type="PRINTS" id="PR00060">
    <property type="entry name" value="RIBOSOMALL16"/>
</dbReference>
<dbReference type="SUPFAM" id="SSF54686">
    <property type="entry name" value="Ribosomal protein L16p/L10e"/>
    <property type="match status" value="1"/>
</dbReference>
<dbReference type="PROSITE" id="PS00586">
    <property type="entry name" value="RIBOSOMAL_L16_1"/>
    <property type="match status" value="1"/>
</dbReference>
<dbReference type="PROSITE" id="PS00701">
    <property type="entry name" value="RIBOSOMAL_L16_2"/>
    <property type="match status" value="1"/>
</dbReference>
<evidence type="ECO:0000255" key="1">
    <source>
        <dbReference type="HAMAP-Rule" id="MF_01342"/>
    </source>
</evidence>
<evidence type="ECO:0000305" key="2"/>
<reference key="1">
    <citation type="journal article" date="2007" name="J. Bacteriol.">
        <title>Genome-wide transcriptional changes in Streptococcus gordonii in response to competence signaling peptide.</title>
        <authorList>
            <person name="Vickerman M.M."/>
            <person name="Iobst S."/>
            <person name="Jesionowski A.M."/>
            <person name="Gill S.R."/>
        </authorList>
    </citation>
    <scope>NUCLEOTIDE SEQUENCE [LARGE SCALE GENOMIC DNA]</scope>
    <source>
        <strain>Challis / ATCC 35105 / BCRC 15272 / CH1 / DL1 / V288</strain>
    </source>
</reference>
<proteinExistence type="inferred from homology"/>
<name>RL16_STRGC</name>
<comment type="function">
    <text evidence="1">Binds 23S rRNA and is also seen to make contacts with the A and possibly P site tRNAs.</text>
</comment>
<comment type="subunit">
    <text evidence="1">Part of the 50S ribosomal subunit.</text>
</comment>
<comment type="similarity">
    <text evidence="1">Belongs to the universal ribosomal protein uL16 family.</text>
</comment>
<gene>
    <name evidence="1" type="primary">rplP</name>
    <name type="ordered locus">SGO_1978</name>
</gene>